<proteinExistence type="inferred from homology"/>
<dbReference type="EMBL" id="AE010299">
    <property type="protein sequence ID" value="AAM03598.1"/>
    <property type="molecule type" value="Genomic_DNA"/>
</dbReference>
<dbReference type="RefSeq" id="WP_011020203.1">
    <property type="nucleotide sequence ID" value="NC_003552.1"/>
</dbReference>
<dbReference type="SMR" id="P58867"/>
<dbReference type="STRING" id="188937.MA_0145"/>
<dbReference type="EnsemblBacteria" id="AAM03598">
    <property type="protein sequence ID" value="AAM03598"/>
    <property type="gene ID" value="MA_0145"/>
</dbReference>
<dbReference type="GeneID" id="1472037"/>
<dbReference type="KEGG" id="mac:MA_0145"/>
<dbReference type="HOGENOM" id="CLU_082102_1_0_2"/>
<dbReference type="InParanoid" id="P58867"/>
<dbReference type="OrthoDB" id="134276at2157"/>
<dbReference type="PhylomeDB" id="P58867"/>
<dbReference type="UniPathway" id="UPA00643"/>
<dbReference type="Proteomes" id="UP000002487">
    <property type="component" value="Chromosome"/>
</dbReference>
<dbReference type="GO" id="GO:0031419">
    <property type="term" value="F:cobalamin binding"/>
    <property type="evidence" value="ECO:0007669"/>
    <property type="project" value="InterPro"/>
</dbReference>
<dbReference type="GO" id="GO:0050897">
    <property type="term" value="F:cobalt ion binding"/>
    <property type="evidence" value="ECO:0007669"/>
    <property type="project" value="InterPro"/>
</dbReference>
<dbReference type="GO" id="GO:0008168">
    <property type="term" value="F:methyltransferase activity"/>
    <property type="evidence" value="ECO:0007669"/>
    <property type="project" value="UniProtKB-ARBA"/>
</dbReference>
<dbReference type="GO" id="GO:0015948">
    <property type="term" value="P:methanogenesis"/>
    <property type="evidence" value="ECO:0007669"/>
    <property type="project" value="UniProtKB-KW"/>
</dbReference>
<dbReference type="CDD" id="cd02070">
    <property type="entry name" value="corrinoid_protein_B12-BD"/>
    <property type="match status" value="1"/>
</dbReference>
<dbReference type="FunFam" id="3.40.50.280:FF:000007">
    <property type="entry name" value="Monomethylamine corrinoid protein 1"/>
    <property type="match status" value="1"/>
</dbReference>
<dbReference type="FunFam" id="1.10.1240.10:FF:000004">
    <property type="entry name" value="Monomethylamine methyltransferase corrinoid protein"/>
    <property type="match status" value="1"/>
</dbReference>
<dbReference type="Gene3D" id="3.40.50.280">
    <property type="entry name" value="Cobalamin-binding domain"/>
    <property type="match status" value="1"/>
</dbReference>
<dbReference type="Gene3D" id="1.10.1240.10">
    <property type="entry name" value="Methionine synthase domain"/>
    <property type="match status" value="1"/>
</dbReference>
<dbReference type="InterPro" id="IPR003759">
    <property type="entry name" value="Cbl-bd_cap"/>
</dbReference>
<dbReference type="InterPro" id="IPR006158">
    <property type="entry name" value="Cobalamin-bd"/>
</dbReference>
<dbReference type="InterPro" id="IPR036724">
    <property type="entry name" value="Cobalamin-bd_sf"/>
</dbReference>
<dbReference type="InterPro" id="IPR012741">
    <property type="entry name" value="Corrinoid_p"/>
</dbReference>
<dbReference type="InterPro" id="IPR050554">
    <property type="entry name" value="Met_Synthase/Corrinoid"/>
</dbReference>
<dbReference type="InterPro" id="IPR036594">
    <property type="entry name" value="Meth_synthase_dom"/>
</dbReference>
<dbReference type="NCBIfam" id="TIGR02370">
    <property type="entry name" value="pyl_corrinoid"/>
    <property type="match status" value="1"/>
</dbReference>
<dbReference type="PANTHER" id="PTHR45833">
    <property type="entry name" value="METHIONINE SYNTHASE"/>
    <property type="match status" value="1"/>
</dbReference>
<dbReference type="PANTHER" id="PTHR45833:SF1">
    <property type="entry name" value="METHIONINE SYNTHASE"/>
    <property type="match status" value="1"/>
</dbReference>
<dbReference type="Pfam" id="PF02310">
    <property type="entry name" value="B12-binding"/>
    <property type="match status" value="1"/>
</dbReference>
<dbReference type="Pfam" id="PF02607">
    <property type="entry name" value="B12-binding_2"/>
    <property type="match status" value="1"/>
</dbReference>
<dbReference type="SMART" id="SM01018">
    <property type="entry name" value="B12-binding_2"/>
    <property type="match status" value="1"/>
</dbReference>
<dbReference type="SUPFAM" id="SSF52242">
    <property type="entry name" value="Cobalamin (vitamin B12)-binding domain"/>
    <property type="match status" value="1"/>
</dbReference>
<dbReference type="SUPFAM" id="SSF47644">
    <property type="entry name" value="Methionine synthase domain"/>
    <property type="match status" value="1"/>
</dbReference>
<dbReference type="PROSITE" id="PS51332">
    <property type="entry name" value="B12_BINDING"/>
    <property type="match status" value="1"/>
</dbReference>
<dbReference type="PROSITE" id="PS51337">
    <property type="entry name" value="B12_BINDING_NTER"/>
    <property type="match status" value="1"/>
</dbReference>
<name>MTMC1_METAC</name>
<keyword id="KW-0170">Cobalt</keyword>
<keyword id="KW-0479">Metal-binding</keyword>
<keyword id="KW-0484">Methanogenesis</keyword>
<keyword id="KW-1185">Reference proteome</keyword>
<keyword id="KW-0677">Repeat</keyword>
<gene>
    <name type="primary">mtmC1</name>
    <name type="ordered locus">MA_0145</name>
</gene>
<accession>P58867</accession>
<organism>
    <name type="scientific">Methanosarcina acetivorans (strain ATCC 35395 / DSM 2834 / JCM 12185 / C2A)</name>
    <dbReference type="NCBI Taxonomy" id="188937"/>
    <lineage>
        <taxon>Archaea</taxon>
        <taxon>Methanobacteriati</taxon>
        <taxon>Methanobacteriota</taxon>
        <taxon>Stenosarchaea group</taxon>
        <taxon>Methanomicrobia</taxon>
        <taxon>Methanosarcinales</taxon>
        <taxon>Methanosarcinaceae</taxon>
        <taxon>Methanosarcina</taxon>
    </lineage>
</organism>
<sequence length="218" mass="23148">MANQEIFDKLTNAIATQNVAGCAQLAQEALDAGISPLDIITKGLSPGMKIIGDKFEAAEVFLPQIMMSAKAMEAAMKVLTPELEKTKVEGEEGTGLAITFVAEGDIHDIGHRLVTTMLGANGFDILDLGTDVLNETVVEEAAKHKGEKVLLVGSALMTTSMLGQKDLMDRLREENLRDSVKCMFGGAPVSSKWIDEIGADATAENAAEAAKVALNIMK</sequence>
<feature type="initiator methionine" description="Removed" evidence="1">
    <location>
        <position position="1"/>
    </location>
</feature>
<feature type="chain" id="PRO_0000216469" description="Monomethylamine corrinoid protein 1">
    <location>
        <begin position="2"/>
        <end position="218"/>
    </location>
</feature>
<feature type="domain" description="B12-binding N-terminal" evidence="3">
    <location>
        <begin position="1"/>
        <end position="91"/>
    </location>
</feature>
<feature type="domain" description="B12-binding" evidence="2">
    <location>
        <begin position="94"/>
        <end position="218"/>
    </location>
</feature>
<feature type="binding site" description="axial binding residue" evidence="1">
    <location>
        <position position="107"/>
    </location>
    <ligand>
        <name>methylcob(III)alamin</name>
        <dbReference type="ChEBI" id="CHEBI:28115"/>
    </ligand>
    <ligandPart>
        <name>Co</name>
        <dbReference type="ChEBI" id="CHEBI:27638"/>
    </ligandPart>
</feature>
<comment type="function">
    <text evidence="1">Acts as a methyl group carrier between MtmB and MtbA.</text>
</comment>
<comment type="pathway">
    <text>One-carbon metabolism; methanogenesis from methylamine.</text>
</comment>
<comment type="subunit">
    <text evidence="1">Can form a complex with MtmB.</text>
</comment>
<comment type="similarity">
    <text evidence="4">Belongs to the methylamine corrinoid protein family.</text>
</comment>
<evidence type="ECO:0000250" key="1"/>
<evidence type="ECO:0000255" key="2">
    <source>
        <dbReference type="PROSITE-ProRule" id="PRU00666"/>
    </source>
</evidence>
<evidence type="ECO:0000255" key="3">
    <source>
        <dbReference type="PROSITE-ProRule" id="PRU00667"/>
    </source>
</evidence>
<evidence type="ECO:0000305" key="4"/>
<reference key="1">
    <citation type="journal article" date="2002" name="Genome Res.">
        <title>The genome of Methanosarcina acetivorans reveals extensive metabolic and physiological diversity.</title>
        <authorList>
            <person name="Galagan J.E."/>
            <person name="Nusbaum C."/>
            <person name="Roy A."/>
            <person name="Endrizzi M.G."/>
            <person name="Macdonald P."/>
            <person name="FitzHugh W."/>
            <person name="Calvo S."/>
            <person name="Engels R."/>
            <person name="Smirnov S."/>
            <person name="Atnoor D."/>
            <person name="Brown A."/>
            <person name="Allen N."/>
            <person name="Naylor J."/>
            <person name="Stange-Thomann N."/>
            <person name="DeArellano K."/>
            <person name="Johnson R."/>
            <person name="Linton L."/>
            <person name="McEwan P."/>
            <person name="McKernan K."/>
            <person name="Talamas J."/>
            <person name="Tirrell A."/>
            <person name="Ye W."/>
            <person name="Zimmer A."/>
            <person name="Barber R.D."/>
            <person name="Cann I."/>
            <person name="Graham D.E."/>
            <person name="Grahame D.A."/>
            <person name="Guss A.M."/>
            <person name="Hedderich R."/>
            <person name="Ingram-Smith C."/>
            <person name="Kuettner H.C."/>
            <person name="Krzycki J.A."/>
            <person name="Leigh J.A."/>
            <person name="Li W."/>
            <person name="Liu J."/>
            <person name="Mukhopadhyay B."/>
            <person name="Reeve J.N."/>
            <person name="Smith K."/>
            <person name="Springer T.A."/>
            <person name="Umayam L.A."/>
            <person name="White O."/>
            <person name="White R.H."/>
            <person name="de Macario E.C."/>
            <person name="Ferry J.G."/>
            <person name="Jarrell K.F."/>
            <person name="Jing H."/>
            <person name="Macario A.J.L."/>
            <person name="Paulsen I.T."/>
            <person name="Pritchett M."/>
            <person name="Sowers K.R."/>
            <person name="Swanson R.V."/>
            <person name="Zinder S.H."/>
            <person name="Lander E."/>
            <person name="Metcalf W.W."/>
            <person name="Birren B."/>
        </authorList>
    </citation>
    <scope>NUCLEOTIDE SEQUENCE [LARGE SCALE GENOMIC DNA]</scope>
    <source>
        <strain>ATCC 35395 / DSM 2834 / JCM 12185 / C2A</strain>
    </source>
</reference>
<protein>
    <recommendedName>
        <fullName>Monomethylamine corrinoid protein 1</fullName>
        <shortName>MMCP 1</shortName>
    </recommendedName>
</protein>